<dbReference type="EMBL" id="AF401036">
    <property type="protein sequence ID" value="AAK97628.1"/>
    <property type="molecule type" value="Genomic_DNA"/>
</dbReference>
<dbReference type="EMBL" id="AY569331">
    <property type="protein sequence ID" value="AAT77548.1"/>
    <property type="molecule type" value="Genomic_DNA"/>
</dbReference>
<dbReference type="SMR" id="P0DO05"/>
<dbReference type="GlyCosmos" id="P0DO05">
    <property type="glycosylation" value="19 sites, No reported glycans"/>
</dbReference>
<dbReference type="GO" id="GO:0005886">
    <property type="term" value="C:plasma membrane"/>
    <property type="evidence" value="ECO:0007669"/>
    <property type="project" value="UniProtKB-SubCell"/>
</dbReference>
<dbReference type="GO" id="GO:0050832">
    <property type="term" value="P:defense response to fungus"/>
    <property type="evidence" value="ECO:0000314"/>
    <property type="project" value="UniProtKB"/>
</dbReference>
<dbReference type="FunFam" id="3.80.10.10:FF:000111">
    <property type="entry name" value="LRR receptor-like serine/threonine-protein kinase ERECTA"/>
    <property type="match status" value="1"/>
</dbReference>
<dbReference type="FunFam" id="3.80.10.10:FF:000095">
    <property type="entry name" value="LRR receptor-like serine/threonine-protein kinase GSO1"/>
    <property type="match status" value="1"/>
</dbReference>
<dbReference type="FunFam" id="3.80.10.10:FF:000713">
    <property type="entry name" value="Receptor-like protein 48"/>
    <property type="match status" value="1"/>
</dbReference>
<dbReference type="FunFam" id="3.80.10.10:FF:001082">
    <property type="entry name" value="Receptor-like protein Cf-9"/>
    <property type="match status" value="1"/>
</dbReference>
<dbReference type="Gene3D" id="3.80.10.10">
    <property type="entry name" value="Ribonuclease Inhibitor"/>
    <property type="match status" value="4"/>
</dbReference>
<dbReference type="InterPro" id="IPR001611">
    <property type="entry name" value="Leu-rich_rpt"/>
</dbReference>
<dbReference type="InterPro" id="IPR003591">
    <property type="entry name" value="Leu-rich_rpt_typical-subtyp"/>
</dbReference>
<dbReference type="InterPro" id="IPR032675">
    <property type="entry name" value="LRR_dom_sf"/>
</dbReference>
<dbReference type="InterPro" id="IPR013210">
    <property type="entry name" value="LRR_N_plant-typ"/>
</dbReference>
<dbReference type="InterPro" id="IPR046956">
    <property type="entry name" value="RLP23-like"/>
</dbReference>
<dbReference type="PANTHER" id="PTHR48061">
    <property type="entry name" value="LEUCINE-RICH REPEAT RECEPTOR PROTEIN KINASE EMS1-LIKE-RELATED"/>
    <property type="match status" value="1"/>
</dbReference>
<dbReference type="PANTHER" id="PTHR48061:SF10">
    <property type="entry name" value="LEUCINE-RICH REPEAT-CONTAINING N-TERMINAL PLANT-TYPE DOMAIN-CONTAINING PROTEIN"/>
    <property type="match status" value="1"/>
</dbReference>
<dbReference type="Pfam" id="PF00560">
    <property type="entry name" value="LRR_1"/>
    <property type="match status" value="5"/>
</dbReference>
<dbReference type="Pfam" id="PF13855">
    <property type="entry name" value="LRR_8"/>
    <property type="match status" value="4"/>
</dbReference>
<dbReference type="Pfam" id="PF08263">
    <property type="entry name" value="LRRNT_2"/>
    <property type="match status" value="2"/>
</dbReference>
<dbReference type="PRINTS" id="PR00019">
    <property type="entry name" value="LEURICHRPT"/>
</dbReference>
<dbReference type="SMART" id="SM00365">
    <property type="entry name" value="LRR_SD22"/>
    <property type="match status" value="6"/>
</dbReference>
<dbReference type="SMART" id="SM00369">
    <property type="entry name" value="LRR_TYP"/>
    <property type="match status" value="7"/>
</dbReference>
<dbReference type="SUPFAM" id="SSF52058">
    <property type="entry name" value="L domain-like"/>
    <property type="match status" value="3"/>
</dbReference>
<sequence>MGCVKLVFFMLYVFLFQLVSSSSLPHLCPEDQALALLQFKNMFTVNPNAFHYCPDITGREIQSYPRTLSWNKSTSCCSWDGVHCDETTGQVIALDLRCSQLQGKFHSNSSLFQLSNLKRLDLSNNNFIGSLISPKFGEFSDLTHLDLSDSSFTGVIPSEISHLSKLHVLLIGDQYGLSIVPHNFEPLLKNLTQLRELNLYEVNLSSTVPSNFSSHLTTLQLSGTGLRGLLPERVFHLSDLEFLDLSYNSQLMVRFPTTKWNSSASLMKLYVHSVNIADRIPESFSHLTSLHELDMGYTNLSGPIPKPLWNLTNIESLDLRYNHLEGPIPQLPIFEKLKKLSLFRNDNLDGGLEFLSFNTQLERLDLSSNSLTGPIPSNISGLQNLECLYLSSNHLNGSIPSWIFSLPSLVELDLSNNTFSGKIQEFKSKTLSAVTLKQNKLKGRIPNSLLNQKNLQLLLLSHNNISGHISSAICNLKTLILLDLGSNNLEGTIPQCVVERNEYLSHLDLSKNRLSGTINTTFSVGNILRVISLHGNKLTGKVPRSMINCKYLTLLDLGNNMLNDTFPNWLGYLFQLKILSLRSNKLHGPIKSSGNTNLFMGLQILDLSSNGFSGNLPERILGNLQTMKEIDESTGFPEYISDPYDIYYNYLTTISTKGQDYDSVRILDSNMIINLSKNRFEGHIPSIIGDLVGLRTLNLSHNVLEGHIPASFQNLSVLESLDLSSNKISGEIPQQLASLTFLEVLNLSHNHLVGCIPKGKQFDSFGNTSYQGNDGLRGFPLSKLCGGEDQVTTPAELDQEEEEEDSPMISWQGVLVGYGCGLVIGLSVIYIMWSTQYPAWFSRMDLKLEHIITTKMKKHKKRY</sequence>
<comment type="function">
    <text evidence="4 5">Involved in plant defense. Confers resistance to the fungal pathogen C.fulvum through recognition of the AVR9 elicitor protein.</text>
</comment>
<comment type="subcellular location">
    <subcellularLocation>
        <location evidence="6">Cell membrane</location>
        <topology evidence="6">Single-pass type I membrane protein</topology>
    </subcellularLocation>
</comment>
<comment type="domain">
    <text evidence="1">The extracellular leucine-rich repeats are required for the specificity of the elicitor protein recognition.</text>
</comment>
<comment type="similarity">
    <text evidence="6">Belongs to the RLP family.</text>
</comment>
<comment type="caution">
    <text evidence="8">In cv. LA101, 9DC1 results from the rearrangement in the Cf-9 disease resistance gene cluster between Cf-9 and Hcr9-9D, both originating from the cv. Cf9.</text>
</comment>
<accession>P0DO05</accession>
<accession>Q946D6</accession>
<organism>
    <name type="scientific">Solanum pimpinellifolium</name>
    <name type="common">Currant tomato</name>
    <name type="synonym">Lycopersicon pimpinellifolium</name>
    <dbReference type="NCBI Taxonomy" id="4084"/>
    <lineage>
        <taxon>Eukaryota</taxon>
        <taxon>Viridiplantae</taxon>
        <taxon>Streptophyta</taxon>
        <taxon>Embryophyta</taxon>
        <taxon>Tracheophyta</taxon>
        <taxon>Spermatophyta</taxon>
        <taxon>Magnoliopsida</taxon>
        <taxon>eudicotyledons</taxon>
        <taxon>Gunneridae</taxon>
        <taxon>Pentapetalae</taxon>
        <taxon>asterids</taxon>
        <taxon>lamiids</taxon>
        <taxon>Solanales</taxon>
        <taxon>Solanaceae</taxon>
        <taxon>Solanoideae</taxon>
        <taxon>Solaneae</taxon>
        <taxon>Solanum</taxon>
        <taxon>Solanum subgen. Lycopersicon</taxon>
    </lineage>
</organism>
<gene>
    <name evidence="10" type="primary">9DC1</name>
    <name evidence="9" type="synonym">9DC</name>
</gene>
<feature type="signal peptide" evidence="2">
    <location>
        <begin position="1"/>
        <end position="21"/>
    </location>
</feature>
<feature type="chain" id="PRO_5007715774" description="Receptor-like protein 9DC1">
    <location>
        <begin position="22"/>
        <end position="863"/>
    </location>
</feature>
<feature type="topological domain" description="Extracellular" evidence="2">
    <location>
        <begin position="22"/>
        <end position="812"/>
    </location>
</feature>
<feature type="transmembrane region" description="Helical" evidence="2">
    <location>
        <begin position="813"/>
        <end position="833"/>
    </location>
</feature>
<feature type="topological domain" description="Cytoplasmic" evidence="2">
    <location>
        <begin position="834"/>
        <end position="863"/>
    </location>
</feature>
<feature type="repeat" description="LRR 1; degenerate" evidence="6">
    <location>
        <begin position="91"/>
        <end position="114"/>
    </location>
</feature>
<feature type="repeat" description="LRR 2" evidence="2">
    <location>
        <begin position="115"/>
        <end position="138"/>
    </location>
</feature>
<feature type="repeat" description="LRR 3" evidence="2">
    <location>
        <begin position="140"/>
        <end position="163"/>
    </location>
</feature>
<feature type="repeat" description="LRR 4; degenerate" evidence="6">
    <location>
        <begin position="164"/>
        <end position="190"/>
    </location>
</feature>
<feature type="repeat" description="LRR 5" evidence="2">
    <location>
        <begin position="191"/>
        <end position="213"/>
    </location>
</feature>
<feature type="repeat" description="LRR 6" evidence="2">
    <location>
        <begin position="214"/>
        <end position="237"/>
    </location>
</feature>
<feature type="repeat" description="LRR 7" evidence="2">
    <location>
        <begin position="240"/>
        <end position="262"/>
    </location>
</feature>
<feature type="repeat" description="LRR 8" evidence="2">
    <location>
        <begin position="264"/>
        <end position="286"/>
    </location>
</feature>
<feature type="repeat" description="LRR 9" evidence="2">
    <location>
        <begin position="287"/>
        <end position="311"/>
    </location>
</feature>
<feature type="repeat" description="LRR 10" evidence="2">
    <location>
        <begin position="312"/>
        <end position="336"/>
    </location>
</feature>
<feature type="repeat" description="LRR 11; degenerate" evidence="6">
    <location>
        <begin position="337"/>
        <end position="357"/>
    </location>
</feature>
<feature type="repeat" description="LRR 12" evidence="2">
    <location>
        <begin position="358"/>
        <end position="382"/>
    </location>
</feature>
<feature type="repeat" description="LRR 13" evidence="2">
    <location>
        <begin position="383"/>
        <end position="406"/>
    </location>
</feature>
<feature type="repeat" description="LRR 14" evidence="2">
    <location>
        <begin position="408"/>
        <end position="428"/>
    </location>
</feature>
<feature type="repeat" description="LRR 15" evidence="2">
    <location>
        <begin position="429"/>
        <end position="452"/>
    </location>
</feature>
<feature type="repeat" description="LRR 16" evidence="2">
    <location>
        <begin position="454"/>
        <end position="476"/>
    </location>
</feature>
<feature type="repeat" description="LRR 17" evidence="2">
    <location>
        <begin position="477"/>
        <end position="500"/>
    </location>
</feature>
<feature type="repeat" description="LRR 18" evidence="2">
    <location>
        <begin position="502"/>
        <end position="524"/>
    </location>
</feature>
<feature type="repeat" description="LRR 19" evidence="2">
    <location>
        <begin position="525"/>
        <end position="549"/>
    </location>
</feature>
<feature type="repeat" description="LRR 20" evidence="2">
    <location>
        <begin position="551"/>
        <end position="572"/>
    </location>
</feature>
<feature type="repeat" description="LRR 21" evidence="2">
    <location>
        <begin position="573"/>
        <end position="597"/>
    </location>
</feature>
<feature type="repeat" description="LRR 22" evidence="2">
    <location>
        <begin position="599"/>
        <end position="623"/>
    </location>
</feature>
<feature type="repeat" description="LRR 23" evidence="2">
    <location>
        <begin position="667"/>
        <end position="690"/>
    </location>
</feature>
<feature type="repeat" description="LRR 24" evidence="2">
    <location>
        <begin position="691"/>
        <end position="714"/>
    </location>
</feature>
<feature type="repeat" description="LRR 25" evidence="2">
    <location>
        <begin position="715"/>
        <end position="739"/>
    </location>
</feature>
<feature type="repeat" description="LRR 26" evidence="2">
    <location>
        <begin position="741"/>
        <end position="759"/>
    </location>
</feature>
<feature type="region of interest" description="N-cap" evidence="7">
    <location>
        <begin position="24"/>
        <end position="90"/>
    </location>
</feature>
<feature type="region of interest" description="C-cap/acidic domain" evidence="7">
    <location>
        <begin position="760"/>
        <end position="812"/>
    </location>
</feature>
<feature type="glycosylation site" description="N-linked (GlcNAc...) asparagine" evidence="3">
    <location>
        <position position="71"/>
    </location>
</feature>
<feature type="glycosylation site" description="N-linked (GlcNAc...) asparagine" evidence="3">
    <location>
        <position position="108"/>
    </location>
</feature>
<feature type="glycosylation site" description="N-linked (GlcNAc...) asparagine" evidence="3">
    <location>
        <position position="190"/>
    </location>
</feature>
<feature type="glycosylation site" description="N-linked (GlcNAc...) asparagine" evidence="3">
    <location>
        <position position="203"/>
    </location>
</feature>
<feature type="glycosylation site" description="N-linked (GlcNAc...) asparagine" evidence="3">
    <location>
        <position position="211"/>
    </location>
</feature>
<feature type="glycosylation site" description="N-linked (GlcNAc...) asparagine" evidence="3">
    <location>
        <position position="261"/>
    </location>
</feature>
<feature type="glycosylation site" description="N-linked (GlcNAc...) asparagine" evidence="3">
    <location>
        <position position="299"/>
    </location>
</feature>
<feature type="glycosylation site" description="N-linked (GlcNAc...) asparagine" evidence="3">
    <location>
        <position position="310"/>
    </location>
</feature>
<feature type="glycosylation site" description="N-linked (GlcNAc...) asparagine" evidence="3">
    <location>
        <position position="378"/>
    </location>
</feature>
<feature type="glycosylation site" description="N-linked (GlcNAc...) asparagine" evidence="3">
    <location>
        <position position="396"/>
    </location>
</feature>
<feature type="glycosylation site" description="N-linked (GlcNAc...) asparagine" evidence="3">
    <location>
        <position position="416"/>
    </location>
</feature>
<feature type="glycosylation site" description="N-linked (GlcNAc...) asparagine" evidence="3">
    <location>
        <position position="464"/>
    </location>
</feature>
<feature type="glycosylation site" description="N-linked (GlcNAc...) asparagine" evidence="3">
    <location>
        <position position="519"/>
    </location>
</feature>
<feature type="glycosylation site" description="N-linked (GlcNAc...) asparagine" evidence="3">
    <location>
        <position position="563"/>
    </location>
</feature>
<feature type="glycosylation site" description="N-linked (GlcNAc...) asparagine" evidence="3">
    <location>
        <position position="674"/>
    </location>
</feature>
<feature type="glycosylation site" description="N-linked (GlcNAc...) asparagine" evidence="3">
    <location>
        <position position="698"/>
    </location>
</feature>
<feature type="glycosylation site" description="N-linked (GlcNAc...) asparagine" evidence="3">
    <location>
        <position position="714"/>
    </location>
</feature>
<feature type="glycosylation site" description="N-linked (GlcNAc...) asparagine" evidence="3">
    <location>
        <position position="746"/>
    </location>
</feature>
<feature type="glycosylation site" description="N-linked (GlcNAc...) asparagine" evidence="3">
    <location>
        <position position="767"/>
    </location>
</feature>
<keyword id="KW-1003">Cell membrane</keyword>
<keyword id="KW-0325">Glycoprotein</keyword>
<keyword id="KW-0433">Leucine-rich repeat</keyword>
<keyword id="KW-0472">Membrane</keyword>
<keyword id="KW-0611">Plant defense</keyword>
<keyword id="KW-0675">Receptor</keyword>
<keyword id="KW-0677">Repeat</keyword>
<keyword id="KW-0732">Signal</keyword>
<keyword id="KW-0812">Transmembrane</keyword>
<keyword id="KW-1133">Transmembrane helix</keyword>
<evidence type="ECO:0000250" key="1">
    <source>
        <dbReference type="UniProtKB" id="Q40235"/>
    </source>
</evidence>
<evidence type="ECO:0000255" key="2"/>
<evidence type="ECO:0000255" key="3">
    <source>
        <dbReference type="PROSITE-ProRule" id="PRU00498"/>
    </source>
</evidence>
<evidence type="ECO:0000269" key="4">
    <source>
    </source>
</evidence>
<evidence type="ECO:0000269" key="5">
    <source>
    </source>
</evidence>
<evidence type="ECO:0000305" key="6"/>
<evidence type="ECO:0000305" key="7">
    <source>
    </source>
</evidence>
<evidence type="ECO:0000305" key="8">
    <source>
    </source>
</evidence>
<evidence type="ECO:0000312" key="9">
    <source>
        <dbReference type="EMBL" id="AAK97628.1"/>
    </source>
</evidence>
<evidence type="ECO:0000312" key="10">
    <source>
        <dbReference type="EMBL" id="AAT77548.1"/>
    </source>
</evidence>
<protein>
    <recommendedName>
        <fullName evidence="10">Receptor-like protein 9DC1</fullName>
    </recommendedName>
</protein>
<proteinExistence type="inferred from homology"/>
<name>9DC1_SOLPI</name>
<reference key="1">
    <citation type="journal article" date="2001" name="Proc. Natl. Acad. Sci. U.S.A.">
        <title>Intragenic recombination generated two distinct Cf genes that mediate AVR9 recognition in the natural population of Lycopersicon pimpinellifolium.</title>
        <authorList>
            <person name="Van Der Hoorn R.A.L."/>
            <person name="Kruijt M."/>
            <person name="Roth R."/>
            <person name="Brandwagt B.F."/>
            <person name="Joosten M.H.A.J."/>
            <person name="De Wit P.J.G.M."/>
        </authorList>
    </citation>
    <scope>NUCLEOTIDE SEQUENCE [GENOMIC DNA]</scope>
    <scope>FUNCTION</scope>
    <source>
        <strain>cv. LA1301</strain>
    </source>
</reference>
<reference key="2">
    <citation type="journal article" date="2004" name="Genetics">
        <title>Rearrangements in the Cf-9 disease resistance gene cluster of wild tomato have resulted in three genes that mediate Avr9 responsiveness.</title>
        <authorList>
            <person name="Kruijt M."/>
            <person name="Brandwagt B.F."/>
            <person name="de Wit P.J."/>
        </authorList>
    </citation>
    <scope>NUCLEOTIDE SEQUENCE [GENOMIC DNA]</scope>
    <scope>FUNCTION</scope>
    <source>
        <strain>cv. LA1301</strain>
    </source>
</reference>